<evidence type="ECO:0000255" key="1">
    <source>
        <dbReference type="HAMAP-Rule" id="MF_00818"/>
    </source>
</evidence>
<name>QUEF_BACP2</name>
<protein>
    <recommendedName>
        <fullName evidence="1">NADPH-dependent 7-cyano-7-deazaguanine reductase</fullName>
        <ecNumber evidence="1">1.7.1.13</ecNumber>
    </recommendedName>
    <alternativeName>
        <fullName evidence="1">7-cyano-7-carbaguanine reductase</fullName>
    </alternativeName>
    <alternativeName>
        <fullName evidence="1">NADPH-dependent nitrile oxidoreductase</fullName>
    </alternativeName>
    <alternativeName>
        <fullName evidence="1">PreQ(0) reductase</fullName>
    </alternativeName>
</protein>
<keyword id="KW-0963">Cytoplasm</keyword>
<keyword id="KW-0521">NADP</keyword>
<keyword id="KW-0560">Oxidoreductase</keyword>
<keyword id="KW-0671">Queuosine biosynthesis</keyword>
<sequence length="165" mass="19347">MTTRKPEELEGVTLLGNQGTNYLFDYAPQVLETFPNKHTNRDYFVKFNCPEFTSLCPQTGQPDFATVYISYIPNEIMVESKSLKLYLFSFRNHGDFHEDCMNIIMNDLIELMDPRYIEVWGKFTPRGGISIDPYTNYGKPGTKYEEMASYRMMNHDMYPETIDNR</sequence>
<proteinExistence type="inferred from homology"/>
<gene>
    <name evidence="1" type="primary">queF</name>
    <name type="ordered locus">BPUM_1266</name>
</gene>
<feature type="chain" id="PRO_1000062376" description="NADPH-dependent 7-cyano-7-deazaguanine reductase">
    <location>
        <begin position="1"/>
        <end position="165"/>
    </location>
</feature>
<feature type="active site" description="Thioimide intermediate" evidence="1">
    <location>
        <position position="56"/>
    </location>
</feature>
<feature type="active site" description="Proton donor" evidence="1">
    <location>
        <position position="63"/>
    </location>
</feature>
<feature type="binding site" evidence="1">
    <location>
        <begin position="78"/>
        <end position="80"/>
    </location>
    <ligand>
        <name>substrate</name>
    </ligand>
</feature>
<feature type="binding site" evidence="1">
    <location>
        <begin position="97"/>
        <end position="98"/>
    </location>
    <ligand>
        <name>substrate</name>
    </ligand>
</feature>
<comment type="function">
    <text evidence="1">Catalyzes the NADPH-dependent reduction of 7-cyano-7-deazaguanine (preQ0) to 7-aminomethyl-7-deazaguanine (preQ1).</text>
</comment>
<comment type="catalytic activity">
    <reaction evidence="1">
        <text>7-aminomethyl-7-carbaguanine + 2 NADP(+) = 7-cyano-7-deazaguanine + 2 NADPH + 3 H(+)</text>
        <dbReference type="Rhea" id="RHEA:13409"/>
        <dbReference type="ChEBI" id="CHEBI:15378"/>
        <dbReference type="ChEBI" id="CHEBI:45075"/>
        <dbReference type="ChEBI" id="CHEBI:57783"/>
        <dbReference type="ChEBI" id="CHEBI:58349"/>
        <dbReference type="ChEBI" id="CHEBI:58703"/>
        <dbReference type="EC" id="1.7.1.13"/>
    </reaction>
</comment>
<comment type="pathway">
    <text evidence="1">tRNA modification; tRNA-queuosine biosynthesis.</text>
</comment>
<comment type="subcellular location">
    <subcellularLocation>
        <location evidence="1">Cytoplasm</location>
    </subcellularLocation>
</comment>
<comment type="similarity">
    <text evidence="1">Belongs to the GTP cyclohydrolase I family. QueF type 1 subfamily.</text>
</comment>
<dbReference type="EC" id="1.7.1.13" evidence="1"/>
<dbReference type="EMBL" id="CP000813">
    <property type="protein sequence ID" value="ABV61949.1"/>
    <property type="molecule type" value="Genomic_DNA"/>
</dbReference>
<dbReference type="RefSeq" id="WP_003211403.1">
    <property type="nucleotide sequence ID" value="NZ_VEIS01000019.1"/>
</dbReference>
<dbReference type="SMR" id="A8FCI2"/>
<dbReference type="STRING" id="315750.BPUM_1266"/>
<dbReference type="GeneID" id="66362866"/>
<dbReference type="KEGG" id="bpu:BPUM_1266"/>
<dbReference type="eggNOG" id="COG0780">
    <property type="taxonomic scope" value="Bacteria"/>
</dbReference>
<dbReference type="HOGENOM" id="CLU_102489_0_1_9"/>
<dbReference type="OrthoDB" id="9795077at2"/>
<dbReference type="UniPathway" id="UPA00392"/>
<dbReference type="Proteomes" id="UP000001355">
    <property type="component" value="Chromosome"/>
</dbReference>
<dbReference type="GO" id="GO:0005737">
    <property type="term" value="C:cytoplasm"/>
    <property type="evidence" value="ECO:0007669"/>
    <property type="project" value="UniProtKB-SubCell"/>
</dbReference>
<dbReference type="GO" id="GO:0033739">
    <property type="term" value="F:preQ1 synthase activity"/>
    <property type="evidence" value="ECO:0007669"/>
    <property type="project" value="UniProtKB-UniRule"/>
</dbReference>
<dbReference type="GO" id="GO:0008616">
    <property type="term" value="P:queuosine biosynthetic process"/>
    <property type="evidence" value="ECO:0007669"/>
    <property type="project" value="UniProtKB-UniRule"/>
</dbReference>
<dbReference type="GO" id="GO:0006400">
    <property type="term" value="P:tRNA modification"/>
    <property type="evidence" value="ECO:0007669"/>
    <property type="project" value="UniProtKB-UniRule"/>
</dbReference>
<dbReference type="Gene3D" id="3.30.1130.10">
    <property type="match status" value="1"/>
</dbReference>
<dbReference type="HAMAP" id="MF_00818">
    <property type="entry name" value="QueF_type1"/>
    <property type="match status" value="1"/>
</dbReference>
<dbReference type="InterPro" id="IPR043133">
    <property type="entry name" value="GTP-CH-I_C/QueF"/>
</dbReference>
<dbReference type="InterPro" id="IPR050084">
    <property type="entry name" value="NADPH_dep_7-cyano-7-deazaG_red"/>
</dbReference>
<dbReference type="InterPro" id="IPR029500">
    <property type="entry name" value="QueF"/>
</dbReference>
<dbReference type="InterPro" id="IPR016856">
    <property type="entry name" value="QueF_type1"/>
</dbReference>
<dbReference type="NCBIfam" id="TIGR03139">
    <property type="entry name" value="QueF-II"/>
    <property type="match status" value="1"/>
</dbReference>
<dbReference type="PANTHER" id="PTHR34354">
    <property type="entry name" value="NADPH-DEPENDENT 7-CYANO-7-DEAZAGUANINE REDUCTASE"/>
    <property type="match status" value="1"/>
</dbReference>
<dbReference type="PANTHER" id="PTHR34354:SF1">
    <property type="entry name" value="NADPH-DEPENDENT 7-CYANO-7-DEAZAGUANINE REDUCTASE"/>
    <property type="match status" value="1"/>
</dbReference>
<dbReference type="Pfam" id="PF14489">
    <property type="entry name" value="QueF"/>
    <property type="match status" value="1"/>
</dbReference>
<dbReference type="PIRSF" id="PIRSF027377">
    <property type="entry name" value="Nitrile_oxidored_QueF"/>
    <property type="match status" value="1"/>
</dbReference>
<dbReference type="SUPFAM" id="SSF55620">
    <property type="entry name" value="Tetrahydrobiopterin biosynthesis enzymes-like"/>
    <property type="match status" value="1"/>
</dbReference>
<reference key="1">
    <citation type="journal article" date="2007" name="PLoS ONE">
        <title>Paradoxical DNA repair and peroxide resistance gene conservation in Bacillus pumilus SAFR-032.</title>
        <authorList>
            <person name="Gioia J."/>
            <person name="Yerrapragada S."/>
            <person name="Qin X."/>
            <person name="Jiang H."/>
            <person name="Igboeli O.C."/>
            <person name="Muzny D."/>
            <person name="Dugan-Rocha S."/>
            <person name="Ding Y."/>
            <person name="Hawes A."/>
            <person name="Liu W."/>
            <person name="Perez L."/>
            <person name="Kovar C."/>
            <person name="Dinh H."/>
            <person name="Lee S."/>
            <person name="Nazareth L."/>
            <person name="Blyth P."/>
            <person name="Holder M."/>
            <person name="Buhay C."/>
            <person name="Tirumalai M.R."/>
            <person name="Liu Y."/>
            <person name="Dasgupta I."/>
            <person name="Bokhetache L."/>
            <person name="Fujita M."/>
            <person name="Karouia F."/>
            <person name="Eswara Moorthy P."/>
            <person name="Siefert J."/>
            <person name="Uzman A."/>
            <person name="Buzumbo P."/>
            <person name="Verma A."/>
            <person name="Zwiya H."/>
            <person name="McWilliams B.D."/>
            <person name="Olowu A."/>
            <person name="Clinkenbeard K.D."/>
            <person name="Newcombe D."/>
            <person name="Golebiewski L."/>
            <person name="Petrosino J.F."/>
            <person name="Nicholson W.L."/>
            <person name="Fox G.E."/>
            <person name="Venkateswaran K."/>
            <person name="Highlander S.K."/>
            <person name="Weinstock G.M."/>
        </authorList>
    </citation>
    <scope>NUCLEOTIDE SEQUENCE [LARGE SCALE GENOMIC DNA]</scope>
    <source>
        <strain>SAFR-032</strain>
    </source>
</reference>
<accession>A8FCI2</accession>
<organism>
    <name type="scientific">Bacillus pumilus (strain SAFR-032)</name>
    <dbReference type="NCBI Taxonomy" id="315750"/>
    <lineage>
        <taxon>Bacteria</taxon>
        <taxon>Bacillati</taxon>
        <taxon>Bacillota</taxon>
        <taxon>Bacilli</taxon>
        <taxon>Bacillales</taxon>
        <taxon>Bacillaceae</taxon>
        <taxon>Bacillus</taxon>
    </lineage>
</organism>